<gene>
    <name evidence="1" type="primary">rnhB</name>
    <name type="ordered locus">SBO_0171</name>
</gene>
<sequence length="198" mass="21494">MIEFVYPHTQLVAGVDEVGRGPLVGAVVTAAVILDPARPIAGLNDSKKLSEKRRLALCEEIKEKALSWSLGRAEPHEIDELNILHATMLAMQRAVAGLHIAPEYVLIDGNRCPKLPMPAMVVVKGDSRVPEISAASILAKVTRDAEMAALDIVFPQYGFAQHKGYPTAFHLEKLAEHGATEHHRRSFGPVKRALGLAS</sequence>
<accession>Q325V7</accession>
<feature type="chain" id="PRO_0000235763" description="Ribonuclease HII">
    <location>
        <begin position="1"/>
        <end position="198"/>
    </location>
</feature>
<feature type="domain" description="RNase H type-2" evidence="2">
    <location>
        <begin position="10"/>
        <end position="198"/>
    </location>
</feature>
<feature type="binding site" evidence="1">
    <location>
        <position position="16"/>
    </location>
    <ligand>
        <name>a divalent metal cation</name>
        <dbReference type="ChEBI" id="CHEBI:60240"/>
    </ligand>
</feature>
<feature type="binding site" evidence="1">
    <location>
        <position position="17"/>
    </location>
    <ligand>
        <name>a divalent metal cation</name>
        <dbReference type="ChEBI" id="CHEBI:60240"/>
    </ligand>
</feature>
<feature type="binding site" evidence="1">
    <location>
        <position position="108"/>
    </location>
    <ligand>
        <name>a divalent metal cation</name>
        <dbReference type="ChEBI" id="CHEBI:60240"/>
    </ligand>
</feature>
<name>RNH2_SHIBS</name>
<keyword id="KW-0963">Cytoplasm</keyword>
<keyword id="KW-0255">Endonuclease</keyword>
<keyword id="KW-0378">Hydrolase</keyword>
<keyword id="KW-0464">Manganese</keyword>
<keyword id="KW-0479">Metal-binding</keyword>
<keyword id="KW-0540">Nuclease</keyword>
<comment type="function">
    <text evidence="1">Endonuclease that specifically degrades the RNA of RNA-DNA hybrids.</text>
</comment>
<comment type="catalytic activity">
    <reaction evidence="1">
        <text>Endonucleolytic cleavage to 5'-phosphomonoester.</text>
        <dbReference type="EC" id="3.1.26.4"/>
    </reaction>
</comment>
<comment type="cofactor">
    <cofactor evidence="1">
        <name>Mn(2+)</name>
        <dbReference type="ChEBI" id="CHEBI:29035"/>
    </cofactor>
    <cofactor evidence="1">
        <name>Mg(2+)</name>
        <dbReference type="ChEBI" id="CHEBI:18420"/>
    </cofactor>
    <text evidence="1">Manganese or magnesium. Binds 1 divalent metal ion per monomer in the absence of substrate. May bind a second metal ion after substrate binding.</text>
</comment>
<comment type="subcellular location">
    <subcellularLocation>
        <location evidence="1">Cytoplasm</location>
    </subcellularLocation>
</comment>
<comment type="similarity">
    <text evidence="1">Belongs to the RNase HII family.</text>
</comment>
<protein>
    <recommendedName>
        <fullName evidence="1">Ribonuclease HII</fullName>
        <shortName evidence="1">RNase HII</shortName>
        <ecNumber evidence="1">3.1.26.4</ecNumber>
    </recommendedName>
</protein>
<dbReference type="EC" id="3.1.26.4" evidence="1"/>
<dbReference type="EMBL" id="CP000036">
    <property type="protein sequence ID" value="ABB64901.1"/>
    <property type="molecule type" value="Genomic_DNA"/>
</dbReference>
<dbReference type="RefSeq" id="WP_000569422.1">
    <property type="nucleotide sequence ID" value="NC_007613.1"/>
</dbReference>
<dbReference type="SMR" id="Q325V7"/>
<dbReference type="KEGG" id="sbo:SBO_0171"/>
<dbReference type="HOGENOM" id="CLU_036532_3_2_6"/>
<dbReference type="Proteomes" id="UP000007067">
    <property type="component" value="Chromosome"/>
</dbReference>
<dbReference type="GO" id="GO:0005737">
    <property type="term" value="C:cytoplasm"/>
    <property type="evidence" value="ECO:0007669"/>
    <property type="project" value="UniProtKB-SubCell"/>
</dbReference>
<dbReference type="GO" id="GO:0032299">
    <property type="term" value="C:ribonuclease H2 complex"/>
    <property type="evidence" value="ECO:0007669"/>
    <property type="project" value="TreeGrafter"/>
</dbReference>
<dbReference type="GO" id="GO:0030145">
    <property type="term" value="F:manganese ion binding"/>
    <property type="evidence" value="ECO:0007669"/>
    <property type="project" value="UniProtKB-UniRule"/>
</dbReference>
<dbReference type="GO" id="GO:0003723">
    <property type="term" value="F:RNA binding"/>
    <property type="evidence" value="ECO:0007669"/>
    <property type="project" value="InterPro"/>
</dbReference>
<dbReference type="GO" id="GO:0004523">
    <property type="term" value="F:RNA-DNA hybrid ribonuclease activity"/>
    <property type="evidence" value="ECO:0007669"/>
    <property type="project" value="UniProtKB-UniRule"/>
</dbReference>
<dbReference type="GO" id="GO:0043137">
    <property type="term" value="P:DNA replication, removal of RNA primer"/>
    <property type="evidence" value="ECO:0007669"/>
    <property type="project" value="TreeGrafter"/>
</dbReference>
<dbReference type="GO" id="GO:0006298">
    <property type="term" value="P:mismatch repair"/>
    <property type="evidence" value="ECO:0007669"/>
    <property type="project" value="TreeGrafter"/>
</dbReference>
<dbReference type="CDD" id="cd07182">
    <property type="entry name" value="RNase_HII_bacteria_HII_like"/>
    <property type="match status" value="1"/>
</dbReference>
<dbReference type="FunFam" id="3.30.420.10:FF:000006">
    <property type="entry name" value="Ribonuclease HII"/>
    <property type="match status" value="1"/>
</dbReference>
<dbReference type="Gene3D" id="3.30.420.10">
    <property type="entry name" value="Ribonuclease H-like superfamily/Ribonuclease H"/>
    <property type="match status" value="1"/>
</dbReference>
<dbReference type="HAMAP" id="MF_00052_B">
    <property type="entry name" value="RNase_HII_B"/>
    <property type="match status" value="1"/>
</dbReference>
<dbReference type="InterPro" id="IPR022898">
    <property type="entry name" value="RNase_HII"/>
</dbReference>
<dbReference type="InterPro" id="IPR001352">
    <property type="entry name" value="RNase_HII/HIII"/>
</dbReference>
<dbReference type="InterPro" id="IPR024567">
    <property type="entry name" value="RNase_HII/HIII_dom"/>
</dbReference>
<dbReference type="InterPro" id="IPR012337">
    <property type="entry name" value="RNaseH-like_sf"/>
</dbReference>
<dbReference type="InterPro" id="IPR036397">
    <property type="entry name" value="RNaseH_sf"/>
</dbReference>
<dbReference type="NCBIfam" id="NF000594">
    <property type="entry name" value="PRK00015.1-1"/>
    <property type="match status" value="1"/>
</dbReference>
<dbReference type="NCBIfam" id="NF000595">
    <property type="entry name" value="PRK00015.1-3"/>
    <property type="match status" value="1"/>
</dbReference>
<dbReference type="NCBIfam" id="NF000596">
    <property type="entry name" value="PRK00015.1-4"/>
    <property type="match status" value="1"/>
</dbReference>
<dbReference type="PANTHER" id="PTHR10954">
    <property type="entry name" value="RIBONUCLEASE H2 SUBUNIT A"/>
    <property type="match status" value="1"/>
</dbReference>
<dbReference type="PANTHER" id="PTHR10954:SF18">
    <property type="entry name" value="RIBONUCLEASE HII"/>
    <property type="match status" value="1"/>
</dbReference>
<dbReference type="Pfam" id="PF01351">
    <property type="entry name" value="RNase_HII"/>
    <property type="match status" value="1"/>
</dbReference>
<dbReference type="SUPFAM" id="SSF53098">
    <property type="entry name" value="Ribonuclease H-like"/>
    <property type="match status" value="1"/>
</dbReference>
<dbReference type="PROSITE" id="PS51975">
    <property type="entry name" value="RNASE_H_2"/>
    <property type="match status" value="1"/>
</dbReference>
<reference key="1">
    <citation type="journal article" date="2005" name="Nucleic Acids Res.">
        <title>Genome dynamics and diversity of Shigella species, the etiologic agents of bacillary dysentery.</title>
        <authorList>
            <person name="Yang F."/>
            <person name="Yang J."/>
            <person name="Zhang X."/>
            <person name="Chen L."/>
            <person name="Jiang Y."/>
            <person name="Yan Y."/>
            <person name="Tang X."/>
            <person name="Wang J."/>
            <person name="Xiong Z."/>
            <person name="Dong J."/>
            <person name="Xue Y."/>
            <person name="Zhu Y."/>
            <person name="Xu X."/>
            <person name="Sun L."/>
            <person name="Chen S."/>
            <person name="Nie H."/>
            <person name="Peng J."/>
            <person name="Xu J."/>
            <person name="Wang Y."/>
            <person name="Yuan Z."/>
            <person name="Wen Y."/>
            <person name="Yao Z."/>
            <person name="Shen Y."/>
            <person name="Qiang B."/>
            <person name="Hou Y."/>
            <person name="Yu J."/>
            <person name="Jin Q."/>
        </authorList>
    </citation>
    <scope>NUCLEOTIDE SEQUENCE [LARGE SCALE GENOMIC DNA]</scope>
    <source>
        <strain>Sb227</strain>
    </source>
</reference>
<organism>
    <name type="scientific">Shigella boydii serotype 4 (strain Sb227)</name>
    <dbReference type="NCBI Taxonomy" id="300268"/>
    <lineage>
        <taxon>Bacteria</taxon>
        <taxon>Pseudomonadati</taxon>
        <taxon>Pseudomonadota</taxon>
        <taxon>Gammaproteobacteria</taxon>
        <taxon>Enterobacterales</taxon>
        <taxon>Enterobacteriaceae</taxon>
        <taxon>Shigella</taxon>
    </lineage>
</organism>
<proteinExistence type="inferred from homology"/>
<evidence type="ECO:0000255" key="1">
    <source>
        <dbReference type="HAMAP-Rule" id="MF_00052"/>
    </source>
</evidence>
<evidence type="ECO:0000255" key="2">
    <source>
        <dbReference type="PROSITE-ProRule" id="PRU01319"/>
    </source>
</evidence>